<proteinExistence type="inferred from homology"/>
<sequence>MAVISMKQLLEAGVHFGHQTRRWNPKMAKYIFTERNGIHVIDLQQTVKYADQAYDFMRDAAANDAVVLFVGTKKQAADAVAEEAVRSGQYFINHRWLGGTLTNWGTIQKRIARLKEIKRMEEDGTFEVLPKKEVALLNKQRARLEKFLGGIEDMPRIPDVMYVVDPHKEQIAVKEAKKLGIPVVAMVDTNTDPDDIDVIIPANDDAIRAVKLITAKLADAIIEGRQGEDAVAVEAEFAASETQADSIEEIVEVVEGDNA</sequence>
<evidence type="ECO:0000255" key="1">
    <source>
        <dbReference type="HAMAP-Rule" id="MF_00291"/>
    </source>
</evidence>
<evidence type="ECO:0000305" key="2"/>
<gene>
    <name evidence="1" type="primary">rpsB</name>
    <name type="ordered locus">SP70585_2342</name>
</gene>
<organism>
    <name type="scientific">Streptococcus pneumoniae (strain 70585)</name>
    <dbReference type="NCBI Taxonomy" id="488221"/>
    <lineage>
        <taxon>Bacteria</taxon>
        <taxon>Bacillati</taxon>
        <taxon>Bacillota</taxon>
        <taxon>Bacilli</taxon>
        <taxon>Lactobacillales</taxon>
        <taxon>Streptococcaceae</taxon>
        <taxon>Streptococcus</taxon>
    </lineage>
</organism>
<comment type="similarity">
    <text evidence="1">Belongs to the universal ribosomal protein uS2 family.</text>
</comment>
<reference key="1">
    <citation type="journal article" date="2010" name="Genome Biol.">
        <title>Structure and dynamics of the pan-genome of Streptococcus pneumoniae and closely related species.</title>
        <authorList>
            <person name="Donati C."/>
            <person name="Hiller N.L."/>
            <person name="Tettelin H."/>
            <person name="Muzzi A."/>
            <person name="Croucher N.J."/>
            <person name="Angiuoli S.V."/>
            <person name="Oggioni M."/>
            <person name="Dunning Hotopp J.C."/>
            <person name="Hu F.Z."/>
            <person name="Riley D.R."/>
            <person name="Covacci A."/>
            <person name="Mitchell T.J."/>
            <person name="Bentley S.D."/>
            <person name="Kilian M."/>
            <person name="Ehrlich G.D."/>
            <person name="Rappuoli R."/>
            <person name="Moxon E.R."/>
            <person name="Masignani V."/>
        </authorList>
    </citation>
    <scope>NUCLEOTIDE SEQUENCE [LARGE SCALE GENOMIC DNA]</scope>
    <source>
        <strain>70585</strain>
    </source>
</reference>
<accession>C1CBJ2</accession>
<dbReference type="EMBL" id="CP000918">
    <property type="protein sequence ID" value="ACO16785.1"/>
    <property type="molecule type" value="Genomic_DNA"/>
</dbReference>
<dbReference type="RefSeq" id="WP_000268466.1">
    <property type="nucleotide sequence ID" value="NC_012468.1"/>
</dbReference>
<dbReference type="SMR" id="C1CBJ2"/>
<dbReference type="GeneID" id="45652565"/>
<dbReference type="KEGG" id="snm:SP70585_2342"/>
<dbReference type="HOGENOM" id="CLU_040318_1_2_9"/>
<dbReference type="Proteomes" id="UP000002211">
    <property type="component" value="Chromosome"/>
</dbReference>
<dbReference type="GO" id="GO:0022627">
    <property type="term" value="C:cytosolic small ribosomal subunit"/>
    <property type="evidence" value="ECO:0007669"/>
    <property type="project" value="TreeGrafter"/>
</dbReference>
<dbReference type="GO" id="GO:0003735">
    <property type="term" value="F:structural constituent of ribosome"/>
    <property type="evidence" value="ECO:0007669"/>
    <property type="project" value="InterPro"/>
</dbReference>
<dbReference type="GO" id="GO:0006412">
    <property type="term" value="P:translation"/>
    <property type="evidence" value="ECO:0007669"/>
    <property type="project" value="UniProtKB-UniRule"/>
</dbReference>
<dbReference type="CDD" id="cd01425">
    <property type="entry name" value="RPS2"/>
    <property type="match status" value="1"/>
</dbReference>
<dbReference type="FunFam" id="1.10.287.610:FF:000001">
    <property type="entry name" value="30S ribosomal protein S2"/>
    <property type="match status" value="1"/>
</dbReference>
<dbReference type="Gene3D" id="3.40.50.10490">
    <property type="entry name" value="Glucose-6-phosphate isomerase like protein, domain 1"/>
    <property type="match status" value="1"/>
</dbReference>
<dbReference type="Gene3D" id="1.10.287.610">
    <property type="entry name" value="Helix hairpin bin"/>
    <property type="match status" value="1"/>
</dbReference>
<dbReference type="HAMAP" id="MF_00291_B">
    <property type="entry name" value="Ribosomal_uS2_B"/>
    <property type="match status" value="1"/>
</dbReference>
<dbReference type="InterPro" id="IPR001865">
    <property type="entry name" value="Ribosomal_uS2"/>
</dbReference>
<dbReference type="InterPro" id="IPR005706">
    <property type="entry name" value="Ribosomal_uS2_bac/mit/plastid"/>
</dbReference>
<dbReference type="InterPro" id="IPR018130">
    <property type="entry name" value="Ribosomal_uS2_CS"/>
</dbReference>
<dbReference type="InterPro" id="IPR023591">
    <property type="entry name" value="Ribosomal_uS2_flav_dom_sf"/>
</dbReference>
<dbReference type="NCBIfam" id="TIGR01011">
    <property type="entry name" value="rpsB_bact"/>
    <property type="match status" value="1"/>
</dbReference>
<dbReference type="PANTHER" id="PTHR12534">
    <property type="entry name" value="30S RIBOSOMAL PROTEIN S2 PROKARYOTIC AND ORGANELLAR"/>
    <property type="match status" value="1"/>
</dbReference>
<dbReference type="PANTHER" id="PTHR12534:SF0">
    <property type="entry name" value="SMALL RIBOSOMAL SUBUNIT PROTEIN US2M"/>
    <property type="match status" value="1"/>
</dbReference>
<dbReference type="Pfam" id="PF00318">
    <property type="entry name" value="Ribosomal_S2"/>
    <property type="match status" value="1"/>
</dbReference>
<dbReference type="PRINTS" id="PR00395">
    <property type="entry name" value="RIBOSOMALS2"/>
</dbReference>
<dbReference type="SUPFAM" id="SSF52313">
    <property type="entry name" value="Ribosomal protein S2"/>
    <property type="match status" value="1"/>
</dbReference>
<dbReference type="PROSITE" id="PS00962">
    <property type="entry name" value="RIBOSOMAL_S2_1"/>
    <property type="match status" value="1"/>
</dbReference>
<feature type="chain" id="PRO_1000194347" description="Small ribosomal subunit protein uS2">
    <location>
        <begin position="1"/>
        <end position="259"/>
    </location>
</feature>
<keyword id="KW-0687">Ribonucleoprotein</keyword>
<keyword id="KW-0689">Ribosomal protein</keyword>
<protein>
    <recommendedName>
        <fullName evidence="1">Small ribosomal subunit protein uS2</fullName>
    </recommendedName>
    <alternativeName>
        <fullName evidence="2">30S ribosomal protein S2</fullName>
    </alternativeName>
</protein>
<name>RS2_STRP7</name>